<protein>
    <recommendedName>
        <fullName>Alpha,alpha-trehalose-phosphate synthase [UDP-forming] 1</fullName>
        <ecNumber>2.4.1.15</ecNumber>
    </recommendedName>
    <alternativeName>
        <fullName>Trehalose-6-phosphate synthase 1</fullName>
    </alternativeName>
    <alternativeName>
        <fullName>UDP-glucose-glucosephosphate glucosyltransferase 1</fullName>
    </alternativeName>
</protein>
<accession>Q7YZT6</accession>
<accession>Q23515</accession>
<accession>Q2L6W2</accession>
<gene>
    <name type="primary">tps-1</name>
    <name type="synonym">tps1</name>
    <name type="ORF">ZK54.2</name>
</gene>
<dbReference type="EC" id="2.4.1.15"/>
<dbReference type="EMBL" id="AJ512332">
    <property type="protein sequence ID" value="CAD54506.1"/>
    <property type="molecule type" value="mRNA"/>
</dbReference>
<dbReference type="EMBL" id="AJ811573">
    <property type="protein sequence ID" value="CAH18875.1"/>
    <property type="molecule type" value="mRNA"/>
</dbReference>
<dbReference type="EMBL" id="FO080803">
    <property type="protein sequence ID" value="CCD66907.1"/>
    <property type="molecule type" value="Genomic_DNA"/>
</dbReference>
<dbReference type="EMBL" id="FO080803">
    <property type="protein sequence ID" value="CCD66908.1"/>
    <property type="molecule type" value="Genomic_DNA"/>
</dbReference>
<dbReference type="RefSeq" id="NP_001041302.1">
    <molecule id="Q7YZT6-1"/>
    <property type="nucleotide sequence ID" value="NM_001047837.5"/>
</dbReference>
<dbReference type="RefSeq" id="NP_001041303.1">
    <molecule id="Q7YZT6-2"/>
    <property type="nucleotide sequence ID" value="NM_001047838.4"/>
</dbReference>
<dbReference type="SMR" id="Q7YZT6"/>
<dbReference type="BioGRID" id="46653">
    <property type="interactions" value="3"/>
</dbReference>
<dbReference type="FunCoup" id="Q7YZT6">
    <property type="interactions" value="1"/>
</dbReference>
<dbReference type="STRING" id="6239.ZK54.2a.2"/>
<dbReference type="CAZy" id="GT20">
    <property type="family name" value="Glycosyltransferase Family 20"/>
</dbReference>
<dbReference type="PaxDb" id="6239-ZK54.2a.3"/>
<dbReference type="PeptideAtlas" id="Q7YZT6"/>
<dbReference type="EnsemblMetazoa" id="ZK54.2a.1">
    <molecule id="Q7YZT6-1"/>
    <property type="protein sequence ID" value="ZK54.2a.1"/>
    <property type="gene ID" value="WBGene00006602"/>
</dbReference>
<dbReference type="EnsemblMetazoa" id="ZK54.2b.1">
    <molecule id="Q7YZT6-2"/>
    <property type="protein sequence ID" value="ZK54.2b.1"/>
    <property type="gene ID" value="WBGene00006602"/>
</dbReference>
<dbReference type="GeneID" id="181778"/>
<dbReference type="KEGG" id="cel:CELE_ZK54.2"/>
<dbReference type="UCSC" id="ZK54.2b.3">
    <property type="organism name" value="c. elegans"/>
</dbReference>
<dbReference type="AGR" id="WB:WBGene00006602"/>
<dbReference type="CTD" id="181778"/>
<dbReference type="WormBase" id="ZK54.2a">
    <molecule id="Q7YZT6-1"/>
    <property type="protein sequence ID" value="CE07617"/>
    <property type="gene ID" value="WBGene00006602"/>
    <property type="gene designation" value="tps-1"/>
</dbReference>
<dbReference type="WormBase" id="ZK54.2b">
    <molecule id="Q7YZT6-2"/>
    <property type="protein sequence ID" value="CE30330"/>
    <property type="gene ID" value="WBGene00006602"/>
    <property type="gene designation" value="tps-1"/>
</dbReference>
<dbReference type="eggNOG" id="KOG1050">
    <property type="taxonomic scope" value="Eukaryota"/>
</dbReference>
<dbReference type="GeneTree" id="ENSGT00940000167933"/>
<dbReference type="InParanoid" id="Q7YZT6"/>
<dbReference type="OMA" id="HYLAMDI"/>
<dbReference type="OrthoDB" id="755951at2759"/>
<dbReference type="PRO" id="PR:Q7YZT6"/>
<dbReference type="Proteomes" id="UP000001940">
    <property type="component" value="Chromosome X"/>
</dbReference>
<dbReference type="Bgee" id="WBGene00006602">
    <property type="expression patterns" value="Expressed in larva and 3 other cell types or tissues"/>
</dbReference>
<dbReference type="GO" id="GO:0003825">
    <property type="term" value="F:alpha,alpha-trehalose-phosphate synthase (UDP-forming) activity"/>
    <property type="evidence" value="ECO:0000318"/>
    <property type="project" value="GO_Central"/>
</dbReference>
<dbReference type="GO" id="GO:0004805">
    <property type="term" value="F:trehalose-phosphatase activity"/>
    <property type="evidence" value="ECO:0000318"/>
    <property type="project" value="GO_Central"/>
</dbReference>
<dbReference type="GO" id="GO:0005992">
    <property type="term" value="P:trehalose biosynthetic process"/>
    <property type="evidence" value="ECO:0000318"/>
    <property type="project" value="GO_Central"/>
</dbReference>
<dbReference type="CDD" id="cd03788">
    <property type="entry name" value="GT20_TPS"/>
    <property type="match status" value="1"/>
</dbReference>
<dbReference type="FunFam" id="1.20.58.1800:FF:000001">
    <property type="entry name" value="Alpha,alpha-trehalose-phosphate synthase [UDP-forming] 1"/>
    <property type="match status" value="1"/>
</dbReference>
<dbReference type="FunFam" id="3.30.70.3080:FF:000002">
    <property type="entry name" value="Alpha,alpha-trehalose-phosphate synthase [UDP-forming] 2"/>
    <property type="match status" value="1"/>
</dbReference>
<dbReference type="FunFam" id="3.40.50.2000:FF:000206">
    <property type="entry name" value="Trehalose-6-phosphate synthase"/>
    <property type="match status" value="1"/>
</dbReference>
<dbReference type="Gene3D" id="1.20.58.1800">
    <property type="match status" value="1"/>
</dbReference>
<dbReference type="Gene3D" id="3.30.70.3080">
    <property type="match status" value="1"/>
</dbReference>
<dbReference type="Gene3D" id="3.40.50.2000">
    <property type="entry name" value="Glycogen Phosphorylase B"/>
    <property type="match status" value="2"/>
</dbReference>
<dbReference type="Gene3D" id="3.40.50.1000">
    <property type="entry name" value="HAD superfamily/HAD-like"/>
    <property type="match status" value="1"/>
</dbReference>
<dbReference type="InterPro" id="IPR001830">
    <property type="entry name" value="Glyco_trans_20"/>
</dbReference>
<dbReference type="InterPro" id="IPR036412">
    <property type="entry name" value="HAD-like_sf"/>
</dbReference>
<dbReference type="InterPro" id="IPR023214">
    <property type="entry name" value="HAD_sf"/>
</dbReference>
<dbReference type="InterPro" id="IPR049063">
    <property type="entry name" value="T6PP_C"/>
</dbReference>
<dbReference type="InterPro" id="IPR041064">
    <property type="entry name" value="T6PP_helical"/>
</dbReference>
<dbReference type="PANTHER" id="PTHR10788:SF106">
    <property type="entry name" value="BCDNA.GH08860"/>
    <property type="match status" value="1"/>
</dbReference>
<dbReference type="PANTHER" id="PTHR10788">
    <property type="entry name" value="TREHALOSE-6-PHOSPHATE SYNTHASE"/>
    <property type="match status" value="1"/>
</dbReference>
<dbReference type="Pfam" id="PF00982">
    <property type="entry name" value="Glyco_transf_20"/>
    <property type="match status" value="1"/>
</dbReference>
<dbReference type="Pfam" id="PF21141">
    <property type="entry name" value="T6PP_C"/>
    <property type="match status" value="1"/>
</dbReference>
<dbReference type="Pfam" id="PF18572">
    <property type="entry name" value="T6PP_N"/>
    <property type="match status" value="1"/>
</dbReference>
<dbReference type="SUPFAM" id="SSF56784">
    <property type="entry name" value="HAD-like"/>
    <property type="match status" value="1"/>
</dbReference>
<dbReference type="SUPFAM" id="SSF53756">
    <property type="entry name" value="UDP-Glycosyltransferase/glycogen phosphorylase"/>
    <property type="match status" value="1"/>
</dbReference>
<sequence length="1331" mass="150819">MTDTATGVHSNANGVEKVPTPVFSIEGEPTQETAPTRMDPFDRPKNDNDPFEDALKRCHKILEKLDCPFVTGKEKDLDESDDMTENEDHDEMANEDDGIPSNEKKVETRKMDCTSGQLLAPKLPEKAESISSASESSEDSESVAILKYTVRTCYAIWKKRQKNSEIALKGLMIVLELCLSQPSARDDAFSALLETLGYNTVTFWKAVVPQIYNSDLSYATQYREALLFSLVLYDVNHSKNRLRELYAAVPGVRQSMLGIRAKQFGERYRHLQMKIARSRASSRMSSKMGSEENLPAMASMMNDVVFDEEPHTQSPLVDMSHDKQRVINVSNAPPVSISRKTSGSWEIKQGSGGLVACVDPVMSADKKNIWLSNLGVNMQEELKEHSTSTNSLGLPLIKQACAGEVFCVLERNEKKEELTPKQQAVESDMSLLSVLNTYNKHSYQLNPVVVNQDDYNTYYGGISNGLLWPALHNLPQYISPCFDDPELLREQWCAYVRVNYLFAINAARNSRAQDFIWIHDYHLMLCGQIMRSLESSLDIGFFIHIPFQPPANFMTKYKTVADPIMRALLRFTKVGFQTSRDRDTFVKLVAKHIKRTKIEYDSRLDRYTIEHDGWTCSLGVFPVSIKIADFVNIAKNPQTIIEAEEIKKQIMGRSADGGQLFFSVERFDYTKGISEKLRAWQRYFEKYPDRIGKDVLFQVAVTNRRSVDSYRQYQDDVLAVADLINQKFKSEDYPEWKPVIFETDGLPRTRLIAHYLAMDIGVVTPSKDGMNLVAKEMLVCNPTASLVLSTGAGTEVQLSNAQFYSEQEGKCYHRVEEISNTEAFADNFFAAATESKETRTKHGEKINQFLCVHDIDEWSDQFLDPKWTHEVISQCEVKQLGQFYGLMSRTAQVRRQIVECVLKGLPIRPHFRYSLENAKNSLESSCKSGTKLSLEADEESGEEKGFEITYDIHDELSEMEKDLAFLAFIQSDEYENAEEFIKTLGSFYEGGPVLFKNEVKQAAEMLQQGIHYNTFFTDRDGTLKSYACSYPTSVQPAYSAVIQAQFARRCATFCAIVTTAPLLHTGILEVATIPEGYYAYGASAGREWYLNPAQQFKDRSFSAIDLNLMNKVFDIIEELLERPEFRIFKWIGSGIQKHCGHITIAKQDVNGTIPSRKVIRLYEQLVKIVNDFDPNGTTLTMRESDLDFKIYVKAKLKGRIFNKGHGIRLVRERLKPNMSKGNCLVCGDNESDIPMLEECLKLAGSKVYTIWVTADTNLQEKVTQLCDRFSCSNIHFVSCPQVLLGAMAYATAHTLVDERNRKLDYYYDSDTPMDQEESSTLGASLGTSFGN</sequence>
<reference key="1">
    <citation type="journal article" date="2003" name="Int. J. Parasitol.">
        <title>Trehalose metabolism genes in Caenorhabditis elegans and filarial nematodes.</title>
        <authorList>
            <person name="Pellerone F.I."/>
            <person name="Archer S.K."/>
            <person name="Behm C.A."/>
            <person name="Grant W.N."/>
            <person name="Lacey M.J."/>
            <person name="Somerville A.C."/>
        </authorList>
    </citation>
    <scope>NUCLEOTIDE SEQUENCE [MRNA] (ISOFORM A)</scope>
    <scope>DEVELOPMENTAL STAGE</scope>
    <scope>DISRUPTION PHENOTYPE</scope>
    <source>
        <strain>Bristol N2</strain>
    </source>
</reference>
<reference key="2">
    <citation type="journal article" date="2005" name="Biochimie">
        <title>Dehydration-induced tps gene transcripts from an anhydrobiotic nematode contain novel spliced leaders and encode atypical GT-20 family proteins.</title>
        <authorList>
            <person name="Goyal K."/>
            <person name="Browne J.A."/>
            <person name="Burnell A.M."/>
            <person name="Tunnacliffe A."/>
        </authorList>
    </citation>
    <scope>NUCLEOTIDE SEQUENCE [MRNA] (ISOFORM A)</scope>
    <source>
        <strain>Bristol N2</strain>
    </source>
</reference>
<reference key="3">
    <citation type="journal article" date="1998" name="Science">
        <title>Genome sequence of the nematode C. elegans: a platform for investigating biology.</title>
        <authorList>
            <consortium name="The C. elegans sequencing consortium"/>
        </authorList>
    </citation>
    <scope>NUCLEOTIDE SEQUENCE [LARGE SCALE GENOMIC DNA]</scope>
    <scope>ALTERNATIVE SPLICING</scope>
    <source>
        <strain>Bristol N2</strain>
    </source>
</reference>
<evidence type="ECO:0000256" key="1">
    <source>
        <dbReference type="SAM" id="MobiDB-lite"/>
    </source>
</evidence>
<evidence type="ECO:0000269" key="2">
    <source>
    </source>
</evidence>
<evidence type="ECO:0000305" key="3"/>
<organism>
    <name type="scientific">Caenorhabditis elegans</name>
    <dbReference type="NCBI Taxonomy" id="6239"/>
    <lineage>
        <taxon>Eukaryota</taxon>
        <taxon>Metazoa</taxon>
        <taxon>Ecdysozoa</taxon>
        <taxon>Nematoda</taxon>
        <taxon>Chromadorea</taxon>
        <taxon>Rhabditida</taxon>
        <taxon>Rhabditina</taxon>
        <taxon>Rhabditomorpha</taxon>
        <taxon>Rhabditoidea</taxon>
        <taxon>Rhabditidae</taxon>
        <taxon>Peloderinae</taxon>
        <taxon>Caenorhabditis</taxon>
    </lineage>
</organism>
<name>TPS1_CAEEL</name>
<keyword id="KW-0025">Alternative splicing</keyword>
<keyword id="KW-0328">Glycosyltransferase</keyword>
<keyword id="KW-1185">Reference proteome</keyword>
<keyword id="KW-0808">Transferase</keyword>
<proteinExistence type="evidence at transcript level"/>
<feature type="chain" id="PRO_0000385176" description="Alpha,alpha-trehalose-phosphate synthase [UDP-forming] 1">
    <location>
        <begin position="1"/>
        <end position="1331"/>
    </location>
</feature>
<feature type="region of interest" description="Disordered" evidence="1">
    <location>
        <begin position="1"/>
        <end position="50"/>
    </location>
</feature>
<feature type="region of interest" description="Disordered" evidence="1">
    <location>
        <begin position="71"/>
        <end position="118"/>
    </location>
</feature>
<feature type="region of interest" description="Disordered" evidence="1">
    <location>
        <begin position="1312"/>
        <end position="1331"/>
    </location>
</feature>
<feature type="compositionally biased region" description="Polar residues" evidence="1">
    <location>
        <begin position="1"/>
        <end position="13"/>
    </location>
</feature>
<feature type="compositionally biased region" description="Basic and acidic residues" evidence="1">
    <location>
        <begin position="39"/>
        <end position="50"/>
    </location>
</feature>
<feature type="compositionally biased region" description="Acidic residues" evidence="1">
    <location>
        <begin position="77"/>
        <end position="98"/>
    </location>
</feature>
<feature type="compositionally biased region" description="Basic and acidic residues" evidence="1">
    <location>
        <begin position="102"/>
        <end position="112"/>
    </location>
</feature>
<feature type="compositionally biased region" description="Polar residues" evidence="1">
    <location>
        <begin position="1318"/>
        <end position="1331"/>
    </location>
</feature>
<feature type="splice variant" id="VSP_038112" description="In isoform b." evidence="3">
    <location>
        <begin position="1"/>
        <end position="37"/>
    </location>
</feature>
<comment type="function">
    <text>Catalyzes the production of trehalose from glucose-6-phosphate and UDP-alpha-D-glucose in a 2 step process.</text>
</comment>
<comment type="catalytic activity">
    <reaction>
        <text>D-glucose 6-phosphate + UDP-alpha-D-glucose = alpha,alpha-trehalose 6-phosphate + UDP + H(+)</text>
        <dbReference type="Rhea" id="RHEA:18889"/>
        <dbReference type="ChEBI" id="CHEBI:15378"/>
        <dbReference type="ChEBI" id="CHEBI:58223"/>
        <dbReference type="ChEBI" id="CHEBI:58429"/>
        <dbReference type="ChEBI" id="CHEBI:58885"/>
        <dbReference type="ChEBI" id="CHEBI:61548"/>
        <dbReference type="EC" id="2.4.1.15"/>
    </reaction>
</comment>
<comment type="alternative products">
    <event type="alternative splicing"/>
    <isoform>
        <id>Q7YZT6-1</id>
        <name>a</name>
        <sequence type="displayed"/>
    </isoform>
    <isoform>
        <id>Q7YZT6-2</id>
        <name>b</name>
        <sequence type="described" ref="VSP_038112"/>
    </isoform>
</comment>
<comment type="developmental stage">
    <text evidence="2">Expressed in all development stages.</text>
</comment>
<comment type="disruption phenotype">
    <text evidence="2">No visible phenotype.</text>
</comment>
<comment type="similarity">
    <text evidence="3">In the N-terminal section; belongs to the glycosyltransferase 20 family.</text>
</comment>
<comment type="similarity">
    <text evidence="3">In the C-terminal section; belongs to the gob-1 trehalose phosphatase family.</text>
</comment>